<reference key="1">
    <citation type="journal article" date="2001" name="J. Bacteriol.">
        <title>Genome of the bacterium Streptococcus pneumoniae strain R6.</title>
        <authorList>
            <person name="Hoskins J."/>
            <person name="Alborn W.E. Jr."/>
            <person name="Arnold J."/>
            <person name="Blaszczak L.C."/>
            <person name="Burgett S."/>
            <person name="DeHoff B.S."/>
            <person name="Estrem S.T."/>
            <person name="Fritz L."/>
            <person name="Fu D.-J."/>
            <person name="Fuller W."/>
            <person name="Geringer C."/>
            <person name="Gilmour R."/>
            <person name="Glass J.S."/>
            <person name="Khoja H."/>
            <person name="Kraft A.R."/>
            <person name="Lagace R.E."/>
            <person name="LeBlanc D.J."/>
            <person name="Lee L.N."/>
            <person name="Lefkowitz E.J."/>
            <person name="Lu J."/>
            <person name="Matsushima P."/>
            <person name="McAhren S.M."/>
            <person name="McHenney M."/>
            <person name="McLeaster K."/>
            <person name="Mundy C.W."/>
            <person name="Nicas T.I."/>
            <person name="Norris F.H."/>
            <person name="O'Gara M."/>
            <person name="Peery R.B."/>
            <person name="Robertson G.T."/>
            <person name="Rockey P."/>
            <person name="Sun P.-M."/>
            <person name="Winkler M.E."/>
            <person name="Yang Y."/>
            <person name="Young-Bellido M."/>
            <person name="Zhao G."/>
            <person name="Zook C.A."/>
            <person name="Baltz R.H."/>
            <person name="Jaskunas S.R."/>
            <person name="Rosteck P.R. Jr."/>
            <person name="Skatrud P.L."/>
            <person name="Glass J.I."/>
        </authorList>
    </citation>
    <scope>NUCLEOTIDE SEQUENCE [LARGE SCALE GENOMIC DNA]</scope>
    <source>
        <strain>ATCC BAA-255 / R6</strain>
    </source>
</reference>
<name>SYD_STRR6</name>
<keyword id="KW-0030">Aminoacyl-tRNA synthetase</keyword>
<keyword id="KW-0067">ATP-binding</keyword>
<keyword id="KW-0963">Cytoplasm</keyword>
<keyword id="KW-0436">Ligase</keyword>
<keyword id="KW-0547">Nucleotide-binding</keyword>
<keyword id="KW-0648">Protein biosynthesis</keyword>
<keyword id="KW-1185">Reference proteome</keyword>
<dbReference type="EC" id="6.1.1.12" evidence="1"/>
<dbReference type="EMBL" id="AE007317">
    <property type="protein sequence ID" value="AAL00726.1"/>
    <property type="molecule type" value="Genomic_DNA"/>
</dbReference>
<dbReference type="PIR" id="A98112">
    <property type="entry name" value="A98112"/>
</dbReference>
<dbReference type="RefSeq" id="NP_359515.1">
    <property type="nucleotide sequence ID" value="NC_003098.1"/>
</dbReference>
<dbReference type="RefSeq" id="WP_000830872.1">
    <property type="nucleotide sequence ID" value="NC_003098.1"/>
</dbReference>
<dbReference type="SMR" id="Q8CWN4"/>
<dbReference type="STRING" id="171101.spr1924"/>
<dbReference type="KEGG" id="spr:spr1924"/>
<dbReference type="PATRIC" id="fig|171101.6.peg.2075"/>
<dbReference type="eggNOG" id="COG0173">
    <property type="taxonomic scope" value="Bacteria"/>
</dbReference>
<dbReference type="HOGENOM" id="CLU_014330_3_2_9"/>
<dbReference type="Proteomes" id="UP000000586">
    <property type="component" value="Chromosome"/>
</dbReference>
<dbReference type="GO" id="GO:0005737">
    <property type="term" value="C:cytoplasm"/>
    <property type="evidence" value="ECO:0007669"/>
    <property type="project" value="UniProtKB-SubCell"/>
</dbReference>
<dbReference type="GO" id="GO:0004815">
    <property type="term" value="F:aspartate-tRNA ligase activity"/>
    <property type="evidence" value="ECO:0000318"/>
    <property type="project" value="GO_Central"/>
</dbReference>
<dbReference type="GO" id="GO:0005524">
    <property type="term" value="F:ATP binding"/>
    <property type="evidence" value="ECO:0007669"/>
    <property type="project" value="UniProtKB-UniRule"/>
</dbReference>
<dbReference type="GO" id="GO:0140096">
    <property type="term" value="F:catalytic activity, acting on a protein"/>
    <property type="evidence" value="ECO:0007669"/>
    <property type="project" value="UniProtKB-ARBA"/>
</dbReference>
<dbReference type="GO" id="GO:0003676">
    <property type="term" value="F:nucleic acid binding"/>
    <property type="evidence" value="ECO:0007669"/>
    <property type="project" value="InterPro"/>
</dbReference>
<dbReference type="GO" id="GO:0016740">
    <property type="term" value="F:transferase activity"/>
    <property type="evidence" value="ECO:0007669"/>
    <property type="project" value="UniProtKB-ARBA"/>
</dbReference>
<dbReference type="GO" id="GO:0006422">
    <property type="term" value="P:aspartyl-tRNA aminoacylation"/>
    <property type="evidence" value="ECO:0000318"/>
    <property type="project" value="GO_Central"/>
</dbReference>
<dbReference type="CDD" id="cd00777">
    <property type="entry name" value="AspRS_core"/>
    <property type="match status" value="1"/>
</dbReference>
<dbReference type="CDD" id="cd04317">
    <property type="entry name" value="EcAspRS_like_N"/>
    <property type="match status" value="1"/>
</dbReference>
<dbReference type="Gene3D" id="3.30.930.10">
    <property type="entry name" value="Bira Bifunctional Protein, Domain 2"/>
    <property type="match status" value="1"/>
</dbReference>
<dbReference type="Gene3D" id="3.30.1360.30">
    <property type="entry name" value="GAD-like domain"/>
    <property type="match status" value="1"/>
</dbReference>
<dbReference type="Gene3D" id="2.40.50.140">
    <property type="entry name" value="Nucleic acid-binding proteins"/>
    <property type="match status" value="1"/>
</dbReference>
<dbReference type="HAMAP" id="MF_00044">
    <property type="entry name" value="Asp_tRNA_synth_type1"/>
    <property type="match status" value="1"/>
</dbReference>
<dbReference type="InterPro" id="IPR004364">
    <property type="entry name" value="Aa-tRNA-synt_II"/>
</dbReference>
<dbReference type="InterPro" id="IPR006195">
    <property type="entry name" value="aa-tRNA-synth_II"/>
</dbReference>
<dbReference type="InterPro" id="IPR045864">
    <property type="entry name" value="aa-tRNA-synth_II/BPL/LPL"/>
</dbReference>
<dbReference type="InterPro" id="IPR004524">
    <property type="entry name" value="Asp-tRNA-ligase_1"/>
</dbReference>
<dbReference type="InterPro" id="IPR047089">
    <property type="entry name" value="Asp-tRNA-ligase_1_N"/>
</dbReference>
<dbReference type="InterPro" id="IPR002312">
    <property type="entry name" value="Asp/Asn-tRNA-synth_IIb"/>
</dbReference>
<dbReference type="InterPro" id="IPR047090">
    <property type="entry name" value="AspRS_core"/>
</dbReference>
<dbReference type="InterPro" id="IPR004115">
    <property type="entry name" value="GAD-like_sf"/>
</dbReference>
<dbReference type="InterPro" id="IPR029351">
    <property type="entry name" value="GAD_dom"/>
</dbReference>
<dbReference type="InterPro" id="IPR012340">
    <property type="entry name" value="NA-bd_OB-fold"/>
</dbReference>
<dbReference type="InterPro" id="IPR004365">
    <property type="entry name" value="NA-bd_OB_tRNA"/>
</dbReference>
<dbReference type="NCBIfam" id="TIGR00459">
    <property type="entry name" value="aspS_bact"/>
    <property type="match status" value="1"/>
</dbReference>
<dbReference type="NCBIfam" id="NF001750">
    <property type="entry name" value="PRK00476.1"/>
    <property type="match status" value="1"/>
</dbReference>
<dbReference type="PANTHER" id="PTHR22594:SF5">
    <property type="entry name" value="ASPARTATE--TRNA LIGASE, MITOCHONDRIAL"/>
    <property type="match status" value="1"/>
</dbReference>
<dbReference type="PANTHER" id="PTHR22594">
    <property type="entry name" value="ASPARTYL/LYSYL-TRNA SYNTHETASE"/>
    <property type="match status" value="1"/>
</dbReference>
<dbReference type="Pfam" id="PF02938">
    <property type="entry name" value="GAD"/>
    <property type="match status" value="1"/>
</dbReference>
<dbReference type="Pfam" id="PF00152">
    <property type="entry name" value="tRNA-synt_2"/>
    <property type="match status" value="1"/>
</dbReference>
<dbReference type="Pfam" id="PF01336">
    <property type="entry name" value="tRNA_anti-codon"/>
    <property type="match status" value="1"/>
</dbReference>
<dbReference type="PRINTS" id="PR01042">
    <property type="entry name" value="TRNASYNTHASP"/>
</dbReference>
<dbReference type="SUPFAM" id="SSF55681">
    <property type="entry name" value="Class II aaRS and biotin synthetases"/>
    <property type="match status" value="1"/>
</dbReference>
<dbReference type="SUPFAM" id="SSF55261">
    <property type="entry name" value="GAD domain-like"/>
    <property type="match status" value="1"/>
</dbReference>
<dbReference type="SUPFAM" id="SSF50249">
    <property type="entry name" value="Nucleic acid-binding proteins"/>
    <property type="match status" value="1"/>
</dbReference>
<dbReference type="PROSITE" id="PS50862">
    <property type="entry name" value="AA_TRNA_LIGASE_II"/>
    <property type="match status" value="1"/>
</dbReference>
<organism>
    <name type="scientific">Streptococcus pneumoniae (strain ATCC BAA-255 / R6)</name>
    <dbReference type="NCBI Taxonomy" id="171101"/>
    <lineage>
        <taxon>Bacteria</taxon>
        <taxon>Bacillati</taxon>
        <taxon>Bacillota</taxon>
        <taxon>Bacilli</taxon>
        <taxon>Lactobacillales</taxon>
        <taxon>Streptococcaceae</taxon>
        <taxon>Streptococcus</taxon>
    </lineage>
</organism>
<proteinExistence type="inferred from homology"/>
<comment type="function">
    <text evidence="1">Catalyzes the attachment of L-aspartate to tRNA(Asp) in a two-step reaction: L-aspartate is first activated by ATP to form Asp-AMP and then transferred to the acceptor end of tRNA(Asp).</text>
</comment>
<comment type="catalytic activity">
    <reaction evidence="1">
        <text>tRNA(Asp) + L-aspartate + ATP = L-aspartyl-tRNA(Asp) + AMP + diphosphate</text>
        <dbReference type="Rhea" id="RHEA:19649"/>
        <dbReference type="Rhea" id="RHEA-COMP:9660"/>
        <dbReference type="Rhea" id="RHEA-COMP:9678"/>
        <dbReference type="ChEBI" id="CHEBI:29991"/>
        <dbReference type="ChEBI" id="CHEBI:30616"/>
        <dbReference type="ChEBI" id="CHEBI:33019"/>
        <dbReference type="ChEBI" id="CHEBI:78442"/>
        <dbReference type="ChEBI" id="CHEBI:78516"/>
        <dbReference type="ChEBI" id="CHEBI:456215"/>
        <dbReference type="EC" id="6.1.1.12"/>
    </reaction>
</comment>
<comment type="subunit">
    <text evidence="1">Homodimer.</text>
</comment>
<comment type="subcellular location">
    <subcellularLocation>
        <location evidence="1">Cytoplasm</location>
    </subcellularLocation>
</comment>
<comment type="similarity">
    <text evidence="1">Belongs to the class-II aminoacyl-tRNA synthetase family. Type 1 subfamily.</text>
</comment>
<accession>Q8CWN4</accession>
<gene>
    <name evidence="1" type="primary">aspS</name>
    <name type="ordered locus">spr1924</name>
</gene>
<protein>
    <recommendedName>
        <fullName evidence="1">Aspartate--tRNA ligase</fullName>
        <ecNumber evidence="1">6.1.1.12</ecNumber>
    </recommendedName>
    <alternativeName>
        <fullName evidence="1">Aspartyl-tRNA synthetase</fullName>
        <shortName evidence="1">AspRS</shortName>
    </alternativeName>
</protein>
<feature type="chain" id="PRO_0000110956" description="Aspartate--tRNA ligase">
    <location>
        <begin position="1"/>
        <end position="587"/>
    </location>
</feature>
<feature type="region of interest" description="Aspartate" evidence="1">
    <location>
        <begin position="198"/>
        <end position="201"/>
    </location>
</feature>
<feature type="binding site" evidence="1">
    <location>
        <position position="174"/>
    </location>
    <ligand>
        <name>L-aspartate</name>
        <dbReference type="ChEBI" id="CHEBI:29991"/>
    </ligand>
</feature>
<feature type="binding site" evidence="1">
    <location>
        <begin position="220"/>
        <end position="222"/>
    </location>
    <ligand>
        <name>ATP</name>
        <dbReference type="ChEBI" id="CHEBI:30616"/>
    </ligand>
</feature>
<feature type="binding site" evidence="1">
    <location>
        <position position="220"/>
    </location>
    <ligand>
        <name>L-aspartate</name>
        <dbReference type="ChEBI" id="CHEBI:29991"/>
    </ligand>
</feature>
<feature type="binding site" evidence="1">
    <location>
        <position position="229"/>
    </location>
    <ligand>
        <name>ATP</name>
        <dbReference type="ChEBI" id="CHEBI:30616"/>
    </ligand>
</feature>
<feature type="binding site" evidence="1">
    <location>
        <position position="443"/>
    </location>
    <ligand>
        <name>L-aspartate</name>
        <dbReference type="ChEBI" id="CHEBI:29991"/>
    </ligand>
</feature>
<feature type="binding site" evidence="1">
    <location>
        <position position="477"/>
    </location>
    <ligand>
        <name>ATP</name>
        <dbReference type="ChEBI" id="CHEBI:30616"/>
    </ligand>
</feature>
<feature type="binding site" evidence="1">
    <location>
        <position position="484"/>
    </location>
    <ligand>
        <name>L-aspartate</name>
        <dbReference type="ChEBI" id="CHEBI:29991"/>
    </ligand>
</feature>
<feature type="binding site" evidence="1">
    <location>
        <begin position="529"/>
        <end position="532"/>
    </location>
    <ligand>
        <name>ATP</name>
        <dbReference type="ChEBI" id="CHEBI:30616"/>
    </ligand>
</feature>
<sequence>MKRSMYAGRVREEHIGQEITLKGWVGRRRDLGGLIFIDLRDREGIMQLVINPEKVSAEVMATAESLRSEFVIEVTGQVAAREQANDKLPTGAVELNVTALIVLNTAKTTPFEIKDGIEANDDTRLRYRYLDLRRPEMLENLKLRAKVTHSIRNYLDELEFIDVETPFLSKSTPEGARDYLVPSRVNKGHFYALPQSPQITKQLLMNAGFDRYYQIVKCFRDEDLRGDRQPEFTQVDLETSFLTEQEIQDITEGLIARVMKETKDIEVTLPFPRMKYDDAMALYGSDKPDTRFDMLLQDLTEVVKGVDFKVFSEALAVKAIVVKGAADNYSRKDIDKMTEVAKQYGAKGLAWVKVVDGELNGPVAKFLTGIQEELTTALALEDKDLVLFVADTLEVANATLGALRGRIAKELGLIDNDKFNFLWVVDWPMFEWSEEEGRYMSAHHPFTLPQEETAHELEGDLAKVRAIAYDIVLNGYELGGGSLRINQKDLQERMFKALGFSAEEANDQFGFLLEAMDYGFPPHGGLAIGLDRFVMLLAGEENIREVIAFPKNNKATDPMTQAPSTVALKQLEELSLQVEEDETSKTN</sequence>
<evidence type="ECO:0000255" key="1">
    <source>
        <dbReference type="HAMAP-Rule" id="MF_00044"/>
    </source>
</evidence>